<name>RL10_STRP4</name>
<feature type="chain" id="PRO_1000121021" description="Large ribosomal subunit protein uL10">
    <location>
        <begin position="1"/>
        <end position="166"/>
    </location>
</feature>
<accession>B5E5F1</accession>
<organism>
    <name type="scientific">Streptococcus pneumoniae serotype 19F (strain G54)</name>
    <dbReference type="NCBI Taxonomy" id="512566"/>
    <lineage>
        <taxon>Bacteria</taxon>
        <taxon>Bacillati</taxon>
        <taxon>Bacillota</taxon>
        <taxon>Bacilli</taxon>
        <taxon>Lactobacillales</taxon>
        <taxon>Streptococcaceae</taxon>
        <taxon>Streptococcus</taxon>
    </lineage>
</organism>
<evidence type="ECO:0000255" key="1">
    <source>
        <dbReference type="HAMAP-Rule" id="MF_00362"/>
    </source>
</evidence>
<evidence type="ECO:0000305" key="2"/>
<comment type="function">
    <text evidence="1">Forms part of the ribosomal stalk, playing a central role in the interaction of the ribosome with GTP-bound translation factors.</text>
</comment>
<comment type="subunit">
    <text evidence="1">Part of the ribosomal stalk of the 50S ribosomal subunit. The N-terminus interacts with L11 and the large rRNA to form the base of the stalk. The C-terminus forms an elongated spine to which L12 dimers bind in a sequential fashion forming a multimeric L10(L12)X complex.</text>
</comment>
<comment type="similarity">
    <text evidence="1">Belongs to the universal ribosomal protein uL10 family.</text>
</comment>
<keyword id="KW-0687">Ribonucleoprotein</keyword>
<keyword id="KW-0689">Ribosomal protein</keyword>
<keyword id="KW-0694">RNA-binding</keyword>
<keyword id="KW-0699">rRNA-binding</keyword>
<gene>
    <name evidence="1" type="primary">rplJ</name>
    <name type="ordered locus">SPG_1295</name>
</gene>
<proteinExistence type="inferred from homology"/>
<protein>
    <recommendedName>
        <fullName evidence="1">Large ribosomal subunit protein uL10</fullName>
    </recommendedName>
    <alternativeName>
        <fullName evidence="2">50S ribosomal protein L10</fullName>
    </alternativeName>
</protein>
<dbReference type="EMBL" id="CP001015">
    <property type="protein sequence ID" value="ACF55173.1"/>
    <property type="molecule type" value="Genomic_DNA"/>
</dbReference>
<dbReference type="KEGG" id="spx:SPG_1295"/>
<dbReference type="HOGENOM" id="CLU_092227_2_0_9"/>
<dbReference type="GO" id="GO:0015934">
    <property type="term" value="C:large ribosomal subunit"/>
    <property type="evidence" value="ECO:0007669"/>
    <property type="project" value="InterPro"/>
</dbReference>
<dbReference type="GO" id="GO:0070180">
    <property type="term" value="F:large ribosomal subunit rRNA binding"/>
    <property type="evidence" value="ECO:0007669"/>
    <property type="project" value="UniProtKB-UniRule"/>
</dbReference>
<dbReference type="GO" id="GO:0003735">
    <property type="term" value="F:structural constituent of ribosome"/>
    <property type="evidence" value="ECO:0007669"/>
    <property type="project" value="InterPro"/>
</dbReference>
<dbReference type="GO" id="GO:0006412">
    <property type="term" value="P:translation"/>
    <property type="evidence" value="ECO:0007669"/>
    <property type="project" value="UniProtKB-UniRule"/>
</dbReference>
<dbReference type="CDD" id="cd05797">
    <property type="entry name" value="Ribosomal_L10"/>
    <property type="match status" value="1"/>
</dbReference>
<dbReference type="FunFam" id="3.30.70.1730:FF:000001">
    <property type="entry name" value="50S ribosomal protein L10"/>
    <property type="match status" value="1"/>
</dbReference>
<dbReference type="Gene3D" id="3.30.70.1730">
    <property type="match status" value="1"/>
</dbReference>
<dbReference type="HAMAP" id="MF_00362">
    <property type="entry name" value="Ribosomal_uL10"/>
    <property type="match status" value="1"/>
</dbReference>
<dbReference type="InterPro" id="IPR001790">
    <property type="entry name" value="Ribosomal_uL10"/>
</dbReference>
<dbReference type="InterPro" id="IPR043141">
    <property type="entry name" value="Ribosomal_uL10-like_sf"/>
</dbReference>
<dbReference type="InterPro" id="IPR022973">
    <property type="entry name" value="Ribosomal_uL10_bac"/>
</dbReference>
<dbReference type="InterPro" id="IPR047865">
    <property type="entry name" value="Ribosomal_uL10_bac_type"/>
</dbReference>
<dbReference type="InterPro" id="IPR002363">
    <property type="entry name" value="Ribosomal_uL10_CS_bac"/>
</dbReference>
<dbReference type="NCBIfam" id="NF000955">
    <property type="entry name" value="PRK00099.1-1"/>
    <property type="match status" value="1"/>
</dbReference>
<dbReference type="PANTHER" id="PTHR11560">
    <property type="entry name" value="39S RIBOSOMAL PROTEIN L10, MITOCHONDRIAL"/>
    <property type="match status" value="1"/>
</dbReference>
<dbReference type="Pfam" id="PF00466">
    <property type="entry name" value="Ribosomal_L10"/>
    <property type="match status" value="1"/>
</dbReference>
<dbReference type="SUPFAM" id="SSF160369">
    <property type="entry name" value="Ribosomal protein L10-like"/>
    <property type="match status" value="1"/>
</dbReference>
<dbReference type="PROSITE" id="PS01109">
    <property type="entry name" value="RIBOSOMAL_L10"/>
    <property type="match status" value="1"/>
</dbReference>
<reference key="1">
    <citation type="journal article" date="2001" name="Microb. Drug Resist.">
        <title>Annotated draft genomic sequence from a Streptococcus pneumoniae type 19F clinical isolate.</title>
        <authorList>
            <person name="Dopazo J."/>
            <person name="Mendoza A."/>
            <person name="Herrero J."/>
            <person name="Caldara F."/>
            <person name="Humbert Y."/>
            <person name="Friedli L."/>
            <person name="Guerrier M."/>
            <person name="Grand-Schenk E."/>
            <person name="Gandin C."/>
            <person name="de Francesco M."/>
            <person name="Polissi A."/>
            <person name="Buell G."/>
            <person name="Feger G."/>
            <person name="Garcia E."/>
            <person name="Peitsch M."/>
            <person name="Garcia-Bustos J.F."/>
        </authorList>
    </citation>
    <scope>NUCLEOTIDE SEQUENCE [LARGE SCALE GENOMIC DNA]</scope>
    <source>
        <strain>G54</strain>
    </source>
</reference>
<reference key="2">
    <citation type="submission" date="2008-03" db="EMBL/GenBank/DDBJ databases">
        <title>Pneumococcal beta glucoside metabolism investigated by whole genome comparison.</title>
        <authorList>
            <person name="Mulas L."/>
            <person name="Trappetti C."/>
            <person name="Hakenbeck R."/>
            <person name="Iannelli F."/>
            <person name="Pozzi G."/>
            <person name="Davidsen T.M."/>
            <person name="Tettelin H."/>
            <person name="Oggioni M."/>
        </authorList>
    </citation>
    <scope>NUCLEOTIDE SEQUENCE [LARGE SCALE GENOMIC DNA]</scope>
    <source>
        <strain>G54</strain>
    </source>
</reference>
<sequence length="166" mass="17503">MSEAIIAKKAELVDVVAEKMKAAASIVVVDARGLTVEQDTVLRRELRGSEVEYKVIKNSILRRAAEKAGLEDLASVFVGPSAVAFSNEDVIAPAKILNNFSKNAEALEIKGGAIEGAVASKEEILALATLPNREGLLXMLLSVLQAPVRNVALAVKAVAESKEDAA</sequence>